<organism>
    <name type="scientific">Lactococcus lactis subsp. cremoris (strain MG1363)</name>
    <dbReference type="NCBI Taxonomy" id="416870"/>
    <lineage>
        <taxon>Bacteria</taxon>
        <taxon>Bacillati</taxon>
        <taxon>Bacillota</taxon>
        <taxon>Bacilli</taxon>
        <taxon>Lactobacillales</taxon>
        <taxon>Streptococcaceae</taxon>
        <taxon>Lactococcus</taxon>
        <taxon>Lactococcus cremoris subsp. cremoris</taxon>
    </lineage>
</organism>
<gene>
    <name evidence="1 4" type="primary">hpf</name>
    <name evidence="3" type="synonym">yfiA</name>
    <name type="ordered locus">llmg_0616</name>
</gene>
<keyword id="KW-0002">3D-structure</keyword>
<keyword id="KW-0963">Cytoplasm</keyword>
<keyword id="KW-0810">Translation regulation</keyword>
<name>HPF_LACLM</name>
<feature type="chain" id="PRO_0000436444" description="Ribosome hibernation promotion factor">
    <location>
        <begin position="1"/>
        <end position="185"/>
    </location>
</feature>
<feature type="region of interest" description="Probably still associates with ribosome" evidence="5">
    <location>
        <begin position="1"/>
        <end position="125"/>
    </location>
</feature>
<feature type="region of interest" description="Required but not sufficient to restore ribosome dimerization, in vitro will replace E.coli RMF in ribosome dimerization" evidence="2">
    <location>
        <begin position="126"/>
        <end position="185"/>
    </location>
</feature>
<sequence length="185" mass="21314">MIKFNIRGENVEVTDAIRAYVEDKIGKLDKYFNDGHEVTAYVNLKVYTEKRAKVEVTLPAKNVTLRAEDTSQDMYSSIDFVEEKLERQIRKYKTRMNRKPRNAVPTGQVFGDEFAPLDTTDEVAEDHVDIVRTKHVALKPMDAEEAVLQMDMLGHDFYVFTDADSNGTHVVYRRTDGRYGLIETE</sequence>
<comment type="function">
    <text evidence="1 2">Required for dimerization of active 70S ribosomes into 100S ribosomes in stationary phase; 100S ribosomes are translationally inactive and sometimes present during exponential growth. Able to dimerize E.coli 70S ribosomes in vitro (PubMed:24279750).</text>
</comment>
<comment type="subunit">
    <text evidence="1 2">Interacts with 100S ribosomes in stationary phase; alters the relative position of the 30S and 50S subunits.</text>
</comment>
<comment type="subcellular location">
    <subcellularLocation>
        <location evidence="1">Cytoplasm</location>
    </subcellularLocation>
</comment>
<comment type="domain">
    <text evidence="2">The N-terminus (residues 1-126) is homologous to YaiA and HPF of E.coli and can associate with ribosomes, while the C-terminus (residues 126-185) seems to be a functional paralog of E.coli RMF.</text>
</comment>
<comment type="disruption phenotype">
    <text evidence="2">No visible effect on growth until cells have been starved for 5 days; cells recover from starvation less well than wild-type and are dead after 14 days starvation. No 100S ribosomes are formed even in stationary phase.</text>
</comment>
<comment type="similarity">
    <text evidence="1">Belongs to the HPF/YfiA ribosome-associated protein family. Long HPF subfamily.</text>
</comment>
<accession>A2RIX0</accession>
<dbReference type="EMBL" id="AM406671">
    <property type="protein sequence ID" value="CAL97217.1"/>
    <property type="molecule type" value="Genomic_DNA"/>
</dbReference>
<dbReference type="RefSeq" id="WP_011834629.1">
    <property type="nucleotide sequence ID" value="NC_009004.1"/>
</dbReference>
<dbReference type="PDB" id="5MYJ">
    <property type="method" value="EM"/>
    <property type="resolution" value="5.60 A"/>
    <property type="chains" value="A=1-185"/>
</dbReference>
<dbReference type="PDBsum" id="5MYJ"/>
<dbReference type="EMDB" id="EMD-3581"/>
<dbReference type="SMR" id="A2RIX0"/>
<dbReference type="STRING" id="416870.llmg_0616"/>
<dbReference type="GeneID" id="61108917"/>
<dbReference type="KEGG" id="llm:llmg_0616"/>
<dbReference type="eggNOG" id="COG1544">
    <property type="taxonomic scope" value="Bacteria"/>
</dbReference>
<dbReference type="HOGENOM" id="CLU_071472_0_3_9"/>
<dbReference type="OrthoDB" id="9794975at2"/>
<dbReference type="PhylomeDB" id="A2RIX0"/>
<dbReference type="Proteomes" id="UP000000364">
    <property type="component" value="Chromosome"/>
</dbReference>
<dbReference type="GO" id="GO:0022627">
    <property type="term" value="C:cytosolic small ribosomal subunit"/>
    <property type="evidence" value="ECO:0007669"/>
    <property type="project" value="TreeGrafter"/>
</dbReference>
<dbReference type="GO" id="GO:0043024">
    <property type="term" value="F:ribosomal small subunit binding"/>
    <property type="evidence" value="ECO:0007669"/>
    <property type="project" value="TreeGrafter"/>
</dbReference>
<dbReference type="GO" id="GO:0045900">
    <property type="term" value="P:negative regulation of translational elongation"/>
    <property type="evidence" value="ECO:0007669"/>
    <property type="project" value="TreeGrafter"/>
</dbReference>
<dbReference type="CDD" id="cd00552">
    <property type="entry name" value="RaiA"/>
    <property type="match status" value="1"/>
</dbReference>
<dbReference type="FunFam" id="3.30.505.50:FF:000001">
    <property type="entry name" value="Ribosome hibernation promoting factor"/>
    <property type="match status" value="1"/>
</dbReference>
<dbReference type="Gene3D" id="3.30.160.100">
    <property type="entry name" value="Ribosome hibernation promotion factor-like"/>
    <property type="match status" value="1"/>
</dbReference>
<dbReference type="Gene3D" id="3.30.505.50">
    <property type="entry name" value="Sigma 54 modulation/S30EA ribosomal protein, C-terminal domain"/>
    <property type="match status" value="1"/>
</dbReference>
<dbReference type="HAMAP" id="MF_00839">
    <property type="entry name" value="HPF"/>
    <property type="match status" value="1"/>
</dbReference>
<dbReference type="InterPro" id="IPR050574">
    <property type="entry name" value="HPF/YfiA_ribosome-assoc"/>
</dbReference>
<dbReference type="InterPro" id="IPR034694">
    <property type="entry name" value="HPF_long/plastid"/>
</dbReference>
<dbReference type="InterPro" id="IPR036567">
    <property type="entry name" value="RHF-like"/>
</dbReference>
<dbReference type="InterPro" id="IPR003489">
    <property type="entry name" value="RHF/RaiA"/>
</dbReference>
<dbReference type="InterPro" id="IPR032528">
    <property type="entry name" value="Ribosom_S30AE_C"/>
</dbReference>
<dbReference type="InterPro" id="IPR038416">
    <property type="entry name" value="Ribosom_S30AE_C_sf"/>
</dbReference>
<dbReference type="NCBIfam" id="TIGR00741">
    <property type="entry name" value="yfiA"/>
    <property type="match status" value="1"/>
</dbReference>
<dbReference type="PANTHER" id="PTHR33231">
    <property type="entry name" value="30S RIBOSOMAL PROTEIN"/>
    <property type="match status" value="1"/>
</dbReference>
<dbReference type="PANTHER" id="PTHR33231:SF1">
    <property type="entry name" value="30S RIBOSOMAL PROTEIN"/>
    <property type="match status" value="1"/>
</dbReference>
<dbReference type="Pfam" id="PF16321">
    <property type="entry name" value="Ribosom_S30AE_C"/>
    <property type="match status" value="1"/>
</dbReference>
<dbReference type="Pfam" id="PF02482">
    <property type="entry name" value="Ribosomal_S30AE"/>
    <property type="match status" value="1"/>
</dbReference>
<dbReference type="SUPFAM" id="SSF69754">
    <property type="entry name" value="Ribosome binding protein Y (YfiA homologue)"/>
    <property type="match status" value="1"/>
</dbReference>
<evidence type="ECO:0000255" key="1">
    <source>
        <dbReference type="HAMAP-Rule" id="MF_00839"/>
    </source>
</evidence>
<evidence type="ECO:0000269" key="2">
    <source>
    </source>
</evidence>
<evidence type="ECO:0000303" key="3">
    <source>
    </source>
</evidence>
<evidence type="ECO:0000305" key="4"/>
<evidence type="ECO:0000305" key="5">
    <source>
    </source>
</evidence>
<proteinExistence type="evidence at protein level"/>
<reference key="1">
    <citation type="journal article" date="2007" name="J. Bacteriol.">
        <title>The complete genome sequence of the lactic acid bacterial paradigm Lactococcus lactis subsp. cremoris MG1363.</title>
        <authorList>
            <person name="Wegmann U."/>
            <person name="O'Connell-Motherway M."/>
            <person name="Zomer A."/>
            <person name="Buist G."/>
            <person name="Shearman C."/>
            <person name="Canchaya C."/>
            <person name="Ventura M."/>
            <person name="Goesmann A."/>
            <person name="Gasson M.J."/>
            <person name="Kuipers O.P."/>
            <person name="van Sinderen D."/>
            <person name="Kok J."/>
        </authorList>
    </citation>
    <scope>NUCLEOTIDE SEQUENCE [LARGE SCALE GENOMIC DNA]</scope>
    <source>
        <strain>MG1363</strain>
    </source>
</reference>
<reference key="2">
    <citation type="journal article" date="2014" name="Mol. Microbiol.">
        <title>Lactococcus lactis YfiA is necessary and sufficient for ribosome dimerization.</title>
        <authorList>
            <person name="Puri P."/>
            <person name="Eckhardt T.H."/>
            <person name="Franken L.E."/>
            <person name="Fusetti F."/>
            <person name="Stuart M.C."/>
            <person name="Boekema E.J."/>
            <person name="Kuipers O.P."/>
            <person name="Kok J."/>
            <person name="Poolman B."/>
        </authorList>
    </citation>
    <scope>FUNCTION</scope>
    <scope>SUBUNIT</scope>
    <scope>DISRUPTION PHENOTYPE</scope>
    <source>
        <strain>MG1363</strain>
    </source>
</reference>
<protein>
    <recommendedName>
        <fullName evidence="1 3">Ribosome hibernation promotion factor</fullName>
        <shortName evidence="1">HPF</shortName>
    </recommendedName>
    <alternativeName>
        <fullName evidence="3">Lactococcus lactis hibernation promotion factor</fullName>
        <shortName evidence="3">LIHPF</shortName>
    </alternativeName>
</protein>